<dbReference type="EC" id="4.3.3.7" evidence="1"/>
<dbReference type="EMBL" id="CP000828">
    <property type="protein sequence ID" value="ABW28440.1"/>
    <property type="molecule type" value="Genomic_DNA"/>
</dbReference>
<dbReference type="RefSeq" id="WP_012163839.1">
    <property type="nucleotide sequence ID" value="NC_009925.1"/>
</dbReference>
<dbReference type="SMR" id="B0C142"/>
<dbReference type="STRING" id="329726.AM1_3445"/>
<dbReference type="KEGG" id="amr:AM1_3445"/>
<dbReference type="eggNOG" id="COG0329">
    <property type="taxonomic scope" value="Bacteria"/>
</dbReference>
<dbReference type="HOGENOM" id="CLU_049343_7_1_3"/>
<dbReference type="OrthoDB" id="9782828at2"/>
<dbReference type="UniPathway" id="UPA00034">
    <property type="reaction ID" value="UER00017"/>
</dbReference>
<dbReference type="Proteomes" id="UP000000268">
    <property type="component" value="Chromosome"/>
</dbReference>
<dbReference type="GO" id="GO:0005829">
    <property type="term" value="C:cytosol"/>
    <property type="evidence" value="ECO:0007669"/>
    <property type="project" value="TreeGrafter"/>
</dbReference>
<dbReference type="GO" id="GO:0008840">
    <property type="term" value="F:4-hydroxy-tetrahydrodipicolinate synthase activity"/>
    <property type="evidence" value="ECO:0007669"/>
    <property type="project" value="UniProtKB-UniRule"/>
</dbReference>
<dbReference type="GO" id="GO:0019877">
    <property type="term" value="P:diaminopimelate biosynthetic process"/>
    <property type="evidence" value="ECO:0007669"/>
    <property type="project" value="UniProtKB-UniRule"/>
</dbReference>
<dbReference type="GO" id="GO:0009089">
    <property type="term" value="P:lysine biosynthetic process via diaminopimelate"/>
    <property type="evidence" value="ECO:0007669"/>
    <property type="project" value="UniProtKB-UniRule"/>
</dbReference>
<dbReference type="CDD" id="cd00950">
    <property type="entry name" value="DHDPS"/>
    <property type="match status" value="1"/>
</dbReference>
<dbReference type="Gene3D" id="3.20.20.70">
    <property type="entry name" value="Aldolase class I"/>
    <property type="match status" value="1"/>
</dbReference>
<dbReference type="HAMAP" id="MF_00418">
    <property type="entry name" value="DapA"/>
    <property type="match status" value="1"/>
</dbReference>
<dbReference type="InterPro" id="IPR013785">
    <property type="entry name" value="Aldolase_TIM"/>
</dbReference>
<dbReference type="InterPro" id="IPR005263">
    <property type="entry name" value="DapA"/>
</dbReference>
<dbReference type="InterPro" id="IPR002220">
    <property type="entry name" value="DapA-like"/>
</dbReference>
<dbReference type="InterPro" id="IPR020625">
    <property type="entry name" value="Schiff_base-form_aldolases_AS"/>
</dbReference>
<dbReference type="NCBIfam" id="TIGR00674">
    <property type="entry name" value="dapA"/>
    <property type="match status" value="1"/>
</dbReference>
<dbReference type="PANTHER" id="PTHR12128:SF66">
    <property type="entry name" value="4-HYDROXY-2-OXOGLUTARATE ALDOLASE, MITOCHONDRIAL"/>
    <property type="match status" value="1"/>
</dbReference>
<dbReference type="PANTHER" id="PTHR12128">
    <property type="entry name" value="DIHYDRODIPICOLINATE SYNTHASE"/>
    <property type="match status" value="1"/>
</dbReference>
<dbReference type="Pfam" id="PF00701">
    <property type="entry name" value="DHDPS"/>
    <property type="match status" value="1"/>
</dbReference>
<dbReference type="PIRSF" id="PIRSF001365">
    <property type="entry name" value="DHDPS"/>
    <property type="match status" value="1"/>
</dbReference>
<dbReference type="PRINTS" id="PR00146">
    <property type="entry name" value="DHPICSNTHASE"/>
</dbReference>
<dbReference type="SMART" id="SM01130">
    <property type="entry name" value="DHDPS"/>
    <property type="match status" value="1"/>
</dbReference>
<dbReference type="SUPFAM" id="SSF51569">
    <property type="entry name" value="Aldolase"/>
    <property type="match status" value="1"/>
</dbReference>
<dbReference type="PROSITE" id="PS00666">
    <property type="entry name" value="DHDPS_2"/>
    <property type="match status" value="1"/>
</dbReference>
<comment type="function">
    <text evidence="1">Catalyzes the condensation of (S)-aspartate-beta-semialdehyde [(S)-ASA] and pyruvate to 4-hydroxy-tetrahydrodipicolinate (HTPA).</text>
</comment>
<comment type="catalytic activity">
    <reaction evidence="1">
        <text>L-aspartate 4-semialdehyde + pyruvate = (2S,4S)-4-hydroxy-2,3,4,5-tetrahydrodipicolinate + H2O + H(+)</text>
        <dbReference type="Rhea" id="RHEA:34171"/>
        <dbReference type="ChEBI" id="CHEBI:15361"/>
        <dbReference type="ChEBI" id="CHEBI:15377"/>
        <dbReference type="ChEBI" id="CHEBI:15378"/>
        <dbReference type="ChEBI" id="CHEBI:67139"/>
        <dbReference type="ChEBI" id="CHEBI:537519"/>
        <dbReference type="EC" id="4.3.3.7"/>
    </reaction>
</comment>
<comment type="pathway">
    <text evidence="1">Amino-acid biosynthesis; L-lysine biosynthesis via DAP pathway; (S)-tetrahydrodipicolinate from L-aspartate: step 3/4.</text>
</comment>
<comment type="subunit">
    <text evidence="1">Homotetramer; dimer of dimers.</text>
</comment>
<comment type="subcellular location">
    <subcellularLocation>
        <location evidence="1">Cytoplasm</location>
    </subcellularLocation>
</comment>
<comment type="similarity">
    <text evidence="1">Belongs to the DapA family.</text>
</comment>
<comment type="caution">
    <text evidence="2">Was originally thought to be a dihydrodipicolinate synthase (DHDPS), catalyzing the condensation of (S)-aspartate-beta-semialdehyde [(S)-ASA] and pyruvate to dihydrodipicolinate (DHDP). However, it was shown in E.coli that the product of the enzymatic reaction is not dihydrodipicolinate but in fact (4S)-4-hydroxy-2,3,4,5-tetrahydro-(2S)-dipicolinic acid (HTPA), and that the consecutive dehydration reaction leading to DHDP is not spontaneous but catalyzed by DapB.</text>
</comment>
<keyword id="KW-0028">Amino-acid biosynthesis</keyword>
<keyword id="KW-0963">Cytoplasm</keyword>
<keyword id="KW-0220">Diaminopimelate biosynthesis</keyword>
<keyword id="KW-0456">Lyase</keyword>
<keyword id="KW-0457">Lysine biosynthesis</keyword>
<keyword id="KW-1185">Reference proteome</keyword>
<keyword id="KW-0704">Schiff base</keyword>
<proteinExistence type="inferred from homology"/>
<reference key="1">
    <citation type="journal article" date="2008" name="Proc. Natl. Acad. Sci. U.S.A.">
        <title>Niche adaptation and genome expansion in the chlorophyll d-producing cyanobacterium Acaryochloris marina.</title>
        <authorList>
            <person name="Swingley W.D."/>
            <person name="Chen M."/>
            <person name="Cheung P.C."/>
            <person name="Conrad A.L."/>
            <person name="Dejesa L.C."/>
            <person name="Hao J."/>
            <person name="Honchak B.M."/>
            <person name="Karbach L.E."/>
            <person name="Kurdoglu A."/>
            <person name="Lahiri S."/>
            <person name="Mastrian S.D."/>
            <person name="Miyashita H."/>
            <person name="Page L."/>
            <person name="Ramakrishna P."/>
            <person name="Satoh S."/>
            <person name="Sattley W.M."/>
            <person name="Shimada Y."/>
            <person name="Taylor H.L."/>
            <person name="Tomo T."/>
            <person name="Tsuchiya T."/>
            <person name="Wang Z.T."/>
            <person name="Raymond J."/>
            <person name="Mimuro M."/>
            <person name="Blankenship R.E."/>
            <person name="Touchman J.W."/>
        </authorList>
    </citation>
    <scope>NUCLEOTIDE SEQUENCE [LARGE SCALE GENOMIC DNA]</scope>
    <source>
        <strain>MBIC 11017</strain>
    </source>
</reference>
<protein>
    <recommendedName>
        <fullName evidence="1">4-hydroxy-tetrahydrodipicolinate synthase</fullName>
        <shortName evidence="1">HTPA synthase</shortName>
        <ecNumber evidence="1">4.3.3.7</ecNumber>
    </recommendedName>
</protein>
<gene>
    <name evidence="1" type="primary">dapA</name>
    <name type="ordered locus">AM1_3445</name>
</gene>
<organism>
    <name type="scientific">Acaryochloris marina (strain MBIC 11017)</name>
    <dbReference type="NCBI Taxonomy" id="329726"/>
    <lineage>
        <taxon>Bacteria</taxon>
        <taxon>Bacillati</taxon>
        <taxon>Cyanobacteriota</taxon>
        <taxon>Cyanophyceae</taxon>
        <taxon>Acaryochloridales</taxon>
        <taxon>Acaryochloridaceae</taxon>
        <taxon>Acaryochloris</taxon>
    </lineage>
</organism>
<sequence>MTFFGQILTAMVTPFTDTGDMNFSVAEALAIHLADHGTDTLLLCGTTGESPTLTWQEEYELFQVVRKAVASKAKVMAGTGSNSTREAIEATQQAAKLGLDGALLVVPYYNKPPQEGLYEHFRAIAESVPDFPLMLYNIPGRTGQNLEADTVARLAEIGNIVAIKEASGNLDQVSQIRRLTPPEFSIYSGDDSLTLPYLSVGAAGVVSVASHLVGELLQKMVTAFASGEPQVATEIHLKLLPLCKALFATTNPIPVKAALQLQGWQVGSTRLPLPEAPDPIIQKLKNTLTDLALL</sequence>
<name>DAPA_ACAM1</name>
<feature type="chain" id="PRO_1000080518" description="4-hydroxy-tetrahydrodipicolinate synthase">
    <location>
        <begin position="1"/>
        <end position="294"/>
    </location>
</feature>
<feature type="active site" description="Proton donor/acceptor" evidence="1">
    <location>
        <position position="136"/>
    </location>
</feature>
<feature type="active site" description="Schiff-base intermediate with substrate" evidence="1">
    <location>
        <position position="164"/>
    </location>
</feature>
<feature type="binding site" evidence="1">
    <location>
        <position position="47"/>
    </location>
    <ligand>
        <name>pyruvate</name>
        <dbReference type="ChEBI" id="CHEBI:15361"/>
    </ligand>
</feature>
<feature type="binding site" evidence="1">
    <location>
        <position position="206"/>
    </location>
    <ligand>
        <name>pyruvate</name>
        <dbReference type="ChEBI" id="CHEBI:15361"/>
    </ligand>
</feature>
<feature type="site" description="Part of a proton relay during catalysis" evidence="1">
    <location>
        <position position="46"/>
    </location>
</feature>
<feature type="site" description="Part of a proton relay during catalysis" evidence="1">
    <location>
        <position position="109"/>
    </location>
</feature>
<evidence type="ECO:0000255" key="1">
    <source>
        <dbReference type="HAMAP-Rule" id="MF_00418"/>
    </source>
</evidence>
<evidence type="ECO:0000305" key="2"/>
<accession>B0C142</accession>